<name>CDC48_SCHPO</name>
<accession>Q9P3A7</accession>
<accession>O14221</accession>
<dbReference type="EC" id="3.6.4.6" evidence="1"/>
<dbReference type="EMBL" id="CU329670">
    <property type="protein sequence ID" value="CAB99275.2"/>
    <property type="molecule type" value="Genomic_DNA"/>
</dbReference>
<dbReference type="RefSeq" id="NP_593287.2">
    <property type="nucleotide sequence ID" value="NM_001018717.2"/>
</dbReference>
<dbReference type="SMR" id="Q9P3A7"/>
<dbReference type="BioGRID" id="279194">
    <property type="interactions" value="78"/>
</dbReference>
<dbReference type="FunCoup" id="Q9P3A7">
    <property type="interactions" value="482"/>
</dbReference>
<dbReference type="IntAct" id="Q9P3A7">
    <property type="interactions" value="3"/>
</dbReference>
<dbReference type="STRING" id="284812.Q9P3A7"/>
<dbReference type="iPTMnet" id="Q9P3A7"/>
<dbReference type="PaxDb" id="4896-SPAC1565.08.1"/>
<dbReference type="EnsemblFungi" id="SPAC1565.08.1">
    <property type="protein sequence ID" value="SPAC1565.08.1:pep"/>
    <property type="gene ID" value="SPAC1565.08"/>
</dbReference>
<dbReference type="GeneID" id="2542744"/>
<dbReference type="KEGG" id="spo:2542744"/>
<dbReference type="PomBase" id="SPAC1565.08">
    <property type="gene designation" value="cdc48"/>
</dbReference>
<dbReference type="VEuPathDB" id="FungiDB:SPAC1565.08"/>
<dbReference type="eggNOG" id="KOG0730">
    <property type="taxonomic scope" value="Eukaryota"/>
</dbReference>
<dbReference type="HOGENOM" id="CLU_000688_12_2_1"/>
<dbReference type="InParanoid" id="Q9P3A7"/>
<dbReference type="OMA" id="VWPAYPE"/>
<dbReference type="PhylomeDB" id="Q9P3A7"/>
<dbReference type="Reactome" id="R-SPO-110320">
    <property type="pathway name" value="Translesion Synthesis by POLH"/>
</dbReference>
<dbReference type="Reactome" id="R-SPO-3371511">
    <property type="pathway name" value="HSF1 activation"/>
</dbReference>
<dbReference type="Reactome" id="R-SPO-5358346">
    <property type="pathway name" value="Hedgehog ligand biogenesis"/>
</dbReference>
<dbReference type="Reactome" id="R-SPO-5689896">
    <property type="pathway name" value="Ovarian tumor domain proteases"/>
</dbReference>
<dbReference type="Reactome" id="R-SPO-6798695">
    <property type="pathway name" value="Neutrophil degranulation"/>
</dbReference>
<dbReference type="Reactome" id="R-SPO-8876725">
    <property type="pathway name" value="Protein methylation"/>
</dbReference>
<dbReference type="Reactome" id="R-SPO-8951664">
    <property type="pathway name" value="Neddylation"/>
</dbReference>
<dbReference type="Reactome" id="R-SPO-9755511">
    <property type="pathway name" value="KEAP1-NFE2L2 pathway"/>
</dbReference>
<dbReference type="PRO" id="PR:Q9P3A7"/>
<dbReference type="Proteomes" id="UP000002485">
    <property type="component" value="Chromosome I"/>
</dbReference>
<dbReference type="GO" id="GO:0036266">
    <property type="term" value="C:Cdc48p-Npl4p-Vms1p AAA ATPase complex"/>
    <property type="evidence" value="ECO:0000266"/>
    <property type="project" value="PomBase"/>
</dbReference>
<dbReference type="GO" id="GO:0000785">
    <property type="term" value="C:chromatin"/>
    <property type="evidence" value="ECO:0000314"/>
    <property type="project" value="PomBase"/>
</dbReference>
<dbReference type="GO" id="GO:0005737">
    <property type="term" value="C:cytoplasm"/>
    <property type="evidence" value="ECO:0000314"/>
    <property type="project" value="PomBase"/>
</dbReference>
<dbReference type="GO" id="GO:0032473">
    <property type="term" value="C:cytoplasmic side of mitochondrial outer membrane"/>
    <property type="evidence" value="ECO:0000305"/>
    <property type="project" value="PomBase"/>
</dbReference>
<dbReference type="GO" id="GO:0005829">
    <property type="term" value="C:cytosol"/>
    <property type="evidence" value="ECO:0007005"/>
    <property type="project" value="PomBase"/>
</dbReference>
<dbReference type="GO" id="GO:0000836">
    <property type="term" value="C:Hrd1p ubiquitin ligase complex"/>
    <property type="evidence" value="ECO:0000266"/>
    <property type="project" value="PomBase"/>
</dbReference>
<dbReference type="GO" id="GO:1990023">
    <property type="term" value="C:mitotic spindle midzone"/>
    <property type="evidence" value="ECO:0000314"/>
    <property type="project" value="PomBase"/>
</dbReference>
<dbReference type="GO" id="GO:0005634">
    <property type="term" value="C:nucleus"/>
    <property type="evidence" value="ECO:0000314"/>
    <property type="project" value="PomBase"/>
</dbReference>
<dbReference type="GO" id="GO:1990112">
    <property type="term" value="C:RQC complex"/>
    <property type="evidence" value="ECO:0000266"/>
    <property type="project" value="PomBase"/>
</dbReference>
<dbReference type="GO" id="GO:0034098">
    <property type="term" value="C:VCP-NPL4-UFD1 AAA ATPase complex"/>
    <property type="evidence" value="ECO:0000318"/>
    <property type="project" value="GO_Central"/>
</dbReference>
<dbReference type="GO" id="GO:0005524">
    <property type="term" value="F:ATP binding"/>
    <property type="evidence" value="ECO:0007669"/>
    <property type="project" value="UniProtKB-KW"/>
</dbReference>
<dbReference type="GO" id="GO:0016887">
    <property type="term" value="F:ATP hydrolysis activity"/>
    <property type="evidence" value="ECO:0000318"/>
    <property type="project" value="GO_Central"/>
</dbReference>
<dbReference type="GO" id="GO:0140545">
    <property type="term" value="F:ATP-dependent protein disaggregase activity"/>
    <property type="evidence" value="ECO:0000304"/>
    <property type="project" value="PomBase"/>
</dbReference>
<dbReference type="GO" id="GO:0031593">
    <property type="term" value="F:polyubiquitin modification-dependent protein binding"/>
    <property type="evidence" value="ECO:0000318"/>
    <property type="project" value="GO_Central"/>
</dbReference>
<dbReference type="GO" id="GO:0097352">
    <property type="term" value="P:autophagosome maturation"/>
    <property type="evidence" value="ECO:0000318"/>
    <property type="project" value="GO_Central"/>
</dbReference>
<dbReference type="GO" id="GO:0180027">
    <property type="term" value="P:inner nuclear membrane-associated protein degradation pathway"/>
    <property type="evidence" value="ECO:0000315"/>
    <property type="project" value="PomBase"/>
</dbReference>
<dbReference type="GO" id="GO:0051228">
    <property type="term" value="P:mitotic spindle disassembly"/>
    <property type="evidence" value="ECO:0000315"/>
    <property type="project" value="PomBase"/>
</dbReference>
<dbReference type="GO" id="GO:1900039">
    <property type="term" value="P:positive regulation of cellular response to hypoxia"/>
    <property type="evidence" value="ECO:0000315"/>
    <property type="project" value="PomBase"/>
</dbReference>
<dbReference type="GO" id="GO:0043161">
    <property type="term" value="P:proteasome-mediated ubiquitin-dependent protein catabolic process"/>
    <property type="evidence" value="ECO:0000318"/>
    <property type="project" value="GO_Central"/>
</dbReference>
<dbReference type="GO" id="GO:0030970">
    <property type="term" value="P:retrograde protein transport, ER to cytosol"/>
    <property type="evidence" value="ECO:0000318"/>
    <property type="project" value="GO_Central"/>
</dbReference>
<dbReference type="GO" id="GO:1990116">
    <property type="term" value="P:ribosome-associated ubiquitin-dependent protein catabolic process"/>
    <property type="evidence" value="ECO:0000266"/>
    <property type="project" value="PomBase"/>
</dbReference>
<dbReference type="GO" id="GO:0032933">
    <property type="term" value="P:SREBP signaling pathway"/>
    <property type="evidence" value="ECO:0000315"/>
    <property type="project" value="PomBase"/>
</dbReference>
<dbReference type="GO" id="GO:0006511">
    <property type="term" value="P:ubiquitin-dependent protein catabolic process"/>
    <property type="evidence" value="ECO:0000316"/>
    <property type="project" value="PomBase"/>
</dbReference>
<dbReference type="CDD" id="cd19519">
    <property type="entry name" value="RecA-like_CDC48_r1-like"/>
    <property type="match status" value="1"/>
</dbReference>
<dbReference type="CDD" id="cd19528">
    <property type="entry name" value="RecA-like_CDC48_r2-like"/>
    <property type="match status" value="1"/>
</dbReference>
<dbReference type="FunFam" id="1.10.8.60:FF:000004">
    <property type="entry name" value="Cell division control 48"/>
    <property type="match status" value="1"/>
</dbReference>
<dbReference type="FunFam" id="3.10.330.10:FF:000001">
    <property type="entry name" value="Cell division control 48"/>
    <property type="match status" value="1"/>
</dbReference>
<dbReference type="FunFam" id="2.40.40.20:FF:000003">
    <property type="entry name" value="Transitional endoplasmic reticulum ATPase"/>
    <property type="match status" value="1"/>
</dbReference>
<dbReference type="FunFam" id="3.40.50.300:FF:000012">
    <property type="entry name" value="Transitional endoplasmic reticulum ATPase"/>
    <property type="match status" value="1"/>
</dbReference>
<dbReference type="FunFam" id="3.40.50.300:FF:000048">
    <property type="entry name" value="Transitional endoplasmic reticulum ATPase"/>
    <property type="match status" value="1"/>
</dbReference>
<dbReference type="Gene3D" id="1.10.8.60">
    <property type="match status" value="1"/>
</dbReference>
<dbReference type="Gene3D" id="2.40.40.20">
    <property type="match status" value="1"/>
</dbReference>
<dbReference type="Gene3D" id="3.10.330.10">
    <property type="match status" value="1"/>
</dbReference>
<dbReference type="Gene3D" id="6.10.20.150">
    <property type="match status" value="1"/>
</dbReference>
<dbReference type="Gene3D" id="3.40.50.300">
    <property type="entry name" value="P-loop containing nucleotide triphosphate hydrolases"/>
    <property type="match status" value="2"/>
</dbReference>
<dbReference type="InterPro" id="IPR003593">
    <property type="entry name" value="AAA+_ATPase"/>
</dbReference>
<dbReference type="InterPro" id="IPR005938">
    <property type="entry name" value="AAA_ATPase_CDC48"/>
</dbReference>
<dbReference type="InterPro" id="IPR050168">
    <property type="entry name" value="AAA_ATPase_domain"/>
</dbReference>
<dbReference type="InterPro" id="IPR041569">
    <property type="entry name" value="AAA_lid_3"/>
</dbReference>
<dbReference type="InterPro" id="IPR009010">
    <property type="entry name" value="Asp_de-COase-like_dom_sf"/>
</dbReference>
<dbReference type="InterPro" id="IPR003959">
    <property type="entry name" value="ATPase_AAA_core"/>
</dbReference>
<dbReference type="InterPro" id="IPR003960">
    <property type="entry name" value="ATPase_AAA_CS"/>
</dbReference>
<dbReference type="InterPro" id="IPR004201">
    <property type="entry name" value="Cdc48_dom2"/>
</dbReference>
<dbReference type="InterPro" id="IPR029067">
    <property type="entry name" value="CDC48_domain_2-like_sf"/>
</dbReference>
<dbReference type="InterPro" id="IPR003338">
    <property type="entry name" value="CDC4_N-term_subdom"/>
</dbReference>
<dbReference type="InterPro" id="IPR027417">
    <property type="entry name" value="P-loop_NTPase"/>
</dbReference>
<dbReference type="NCBIfam" id="TIGR01243">
    <property type="entry name" value="CDC48"/>
    <property type="match status" value="1"/>
</dbReference>
<dbReference type="PANTHER" id="PTHR23077">
    <property type="entry name" value="AAA-FAMILY ATPASE"/>
    <property type="match status" value="1"/>
</dbReference>
<dbReference type="PANTHER" id="PTHR23077:SF171">
    <property type="entry name" value="NUCLEAR VALOSIN-CONTAINING PROTEIN-LIKE"/>
    <property type="match status" value="1"/>
</dbReference>
<dbReference type="Pfam" id="PF00004">
    <property type="entry name" value="AAA"/>
    <property type="match status" value="2"/>
</dbReference>
<dbReference type="Pfam" id="PF17862">
    <property type="entry name" value="AAA_lid_3"/>
    <property type="match status" value="2"/>
</dbReference>
<dbReference type="Pfam" id="PF02933">
    <property type="entry name" value="CDC48_2"/>
    <property type="match status" value="1"/>
</dbReference>
<dbReference type="Pfam" id="PF02359">
    <property type="entry name" value="CDC48_N"/>
    <property type="match status" value="1"/>
</dbReference>
<dbReference type="SMART" id="SM00382">
    <property type="entry name" value="AAA"/>
    <property type="match status" value="2"/>
</dbReference>
<dbReference type="SMART" id="SM01072">
    <property type="entry name" value="CDC48_2"/>
    <property type="match status" value="1"/>
</dbReference>
<dbReference type="SMART" id="SM01073">
    <property type="entry name" value="CDC48_N"/>
    <property type="match status" value="1"/>
</dbReference>
<dbReference type="SUPFAM" id="SSF50692">
    <property type="entry name" value="ADC-like"/>
    <property type="match status" value="1"/>
</dbReference>
<dbReference type="SUPFAM" id="SSF54585">
    <property type="entry name" value="Cdc48 domain 2-like"/>
    <property type="match status" value="1"/>
</dbReference>
<dbReference type="SUPFAM" id="SSF52540">
    <property type="entry name" value="P-loop containing nucleoside triphosphate hydrolases"/>
    <property type="match status" value="2"/>
</dbReference>
<dbReference type="PROSITE" id="PS00674">
    <property type="entry name" value="AAA"/>
    <property type="match status" value="2"/>
</dbReference>
<organism>
    <name type="scientific">Schizosaccharomyces pombe (strain 972 / ATCC 24843)</name>
    <name type="common">Fission yeast</name>
    <dbReference type="NCBI Taxonomy" id="284812"/>
    <lineage>
        <taxon>Eukaryota</taxon>
        <taxon>Fungi</taxon>
        <taxon>Dikarya</taxon>
        <taxon>Ascomycota</taxon>
        <taxon>Taphrinomycotina</taxon>
        <taxon>Schizosaccharomycetes</taxon>
        <taxon>Schizosaccharomycetales</taxon>
        <taxon>Schizosaccharomycetaceae</taxon>
        <taxon>Schizosaccharomyces</taxon>
    </lineage>
</organism>
<feature type="chain" id="PRO_0000084586" description="Cell division cycle protein 48">
    <location>
        <begin position="1"/>
        <end position="815"/>
    </location>
</feature>
<feature type="region of interest" description="Disordered" evidence="5">
    <location>
        <begin position="1"/>
        <end position="30"/>
    </location>
</feature>
<feature type="region of interest" description="Disordered" evidence="5">
    <location>
        <begin position="794"/>
        <end position="815"/>
    </location>
</feature>
<feature type="compositionally biased region" description="Basic and acidic residues" evidence="5">
    <location>
        <begin position="8"/>
        <end position="18"/>
    </location>
</feature>
<feature type="compositionally biased region" description="Polar residues" evidence="5">
    <location>
        <begin position="795"/>
        <end position="804"/>
    </location>
</feature>
<feature type="binding site" evidence="3">
    <location>
        <begin position="267"/>
        <end position="273"/>
    </location>
    <ligand>
        <name>ATP</name>
        <dbReference type="ChEBI" id="CHEBI:30616"/>
        <label>1</label>
    </ligand>
</feature>
<feature type="binding site" evidence="3">
    <location>
        <position position="368"/>
    </location>
    <ligand>
        <name>ATP</name>
        <dbReference type="ChEBI" id="CHEBI:30616"/>
        <label>1</label>
    </ligand>
</feature>
<feature type="binding site" evidence="3">
    <location>
        <position position="404"/>
    </location>
    <ligand>
        <name>ATP</name>
        <dbReference type="ChEBI" id="CHEBI:30616"/>
        <label>1</label>
    </ligand>
</feature>
<feature type="binding site" evidence="4">
    <location>
        <begin position="541"/>
        <end position="546"/>
    </location>
    <ligand>
        <name>ATP</name>
        <dbReference type="ChEBI" id="CHEBI:30616"/>
        <label>2</label>
    </ligand>
</feature>
<evidence type="ECO:0000250" key="1">
    <source>
        <dbReference type="UniProtKB" id="P25694"/>
    </source>
</evidence>
<evidence type="ECO:0000250" key="2">
    <source>
        <dbReference type="UniProtKB" id="P54811"/>
    </source>
</evidence>
<evidence type="ECO:0000250" key="3">
    <source>
        <dbReference type="UniProtKB" id="P55072"/>
    </source>
</evidence>
<evidence type="ECO:0000250" key="4">
    <source>
        <dbReference type="UniProtKB" id="Q01853"/>
    </source>
</evidence>
<evidence type="ECO:0000256" key="5">
    <source>
        <dbReference type="SAM" id="MobiDB-lite"/>
    </source>
</evidence>
<evidence type="ECO:0000269" key="6">
    <source>
    </source>
</evidence>
<evidence type="ECO:0000269" key="7">
    <source>
    </source>
</evidence>
<evidence type="ECO:0000269" key="8">
    <source>
    </source>
</evidence>
<evidence type="ECO:0000269" key="9">
    <source>
    </source>
</evidence>
<evidence type="ECO:0000305" key="10"/>
<evidence type="ECO:0000312" key="11">
    <source>
        <dbReference type="PomBase" id="SPAC1565.08"/>
    </source>
</evidence>
<protein>
    <recommendedName>
        <fullName evidence="1">Cell division cycle protein 48</fullName>
        <ecNumber evidence="1">3.6.4.6</ecNumber>
    </recommendedName>
    <alternativeName>
        <fullName evidence="10">Transitional endoplasmic reticulum ATPase homolog</fullName>
    </alternativeName>
</protein>
<keyword id="KW-0067">ATP-binding</keyword>
<keyword id="KW-0131">Cell cycle</keyword>
<keyword id="KW-0143">Chaperone</keyword>
<keyword id="KW-0963">Cytoplasm</keyword>
<keyword id="KW-0378">Hydrolase</keyword>
<keyword id="KW-0547">Nucleotide-binding</keyword>
<keyword id="KW-0539">Nucleus</keyword>
<keyword id="KW-0653">Protein transport</keyword>
<keyword id="KW-1185">Reference proteome</keyword>
<keyword id="KW-0677">Repeat</keyword>
<keyword id="KW-0813">Transport</keyword>
<reference key="1">
    <citation type="journal article" date="2002" name="Nature">
        <title>The genome sequence of Schizosaccharomyces pombe.</title>
        <authorList>
            <person name="Wood V."/>
            <person name="Gwilliam R."/>
            <person name="Rajandream M.A."/>
            <person name="Lyne M.H."/>
            <person name="Lyne R."/>
            <person name="Stewart A."/>
            <person name="Sgouros J.G."/>
            <person name="Peat N."/>
            <person name="Hayles J."/>
            <person name="Baker S.G."/>
            <person name="Basham D."/>
            <person name="Bowman S."/>
            <person name="Brooks K."/>
            <person name="Brown D."/>
            <person name="Brown S."/>
            <person name="Chillingworth T."/>
            <person name="Churcher C.M."/>
            <person name="Collins M."/>
            <person name="Connor R."/>
            <person name="Cronin A."/>
            <person name="Davis P."/>
            <person name="Feltwell T."/>
            <person name="Fraser A."/>
            <person name="Gentles S."/>
            <person name="Goble A."/>
            <person name="Hamlin N."/>
            <person name="Harris D.E."/>
            <person name="Hidalgo J."/>
            <person name="Hodgson G."/>
            <person name="Holroyd S."/>
            <person name="Hornsby T."/>
            <person name="Howarth S."/>
            <person name="Huckle E.J."/>
            <person name="Hunt S."/>
            <person name="Jagels K."/>
            <person name="James K.D."/>
            <person name="Jones L."/>
            <person name="Jones M."/>
            <person name="Leather S."/>
            <person name="McDonald S."/>
            <person name="McLean J."/>
            <person name="Mooney P."/>
            <person name="Moule S."/>
            <person name="Mungall K.L."/>
            <person name="Murphy L.D."/>
            <person name="Niblett D."/>
            <person name="Odell C."/>
            <person name="Oliver K."/>
            <person name="O'Neil S."/>
            <person name="Pearson D."/>
            <person name="Quail M.A."/>
            <person name="Rabbinowitsch E."/>
            <person name="Rutherford K.M."/>
            <person name="Rutter S."/>
            <person name="Saunders D."/>
            <person name="Seeger K."/>
            <person name="Sharp S."/>
            <person name="Skelton J."/>
            <person name="Simmonds M.N."/>
            <person name="Squares R."/>
            <person name="Squares S."/>
            <person name="Stevens K."/>
            <person name="Taylor K."/>
            <person name="Taylor R.G."/>
            <person name="Tivey A."/>
            <person name="Walsh S.V."/>
            <person name="Warren T."/>
            <person name="Whitehead S."/>
            <person name="Woodward J.R."/>
            <person name="Volckaert G."/>
            <person name="Aert R."/>
            <person name="Robben J."/>
            <person name="Grymonprez B."/>
            <person name="Weltjens I."/>
            <person name="Vanstreels E."/>
            <person name="Rieger M."/>
            <person name="Schaefer M."/>
            <person name="Mueller-Auer S."/>
            <person name="Gabel C."/>
            <person name="Fuchs M."/>
            <person name="Duesterhoeft A."/>
            <person name="Fritzc C."/>
            <person name="Holzer E."/>
            <person name="Moestl D."/>
            <person name="Hilbert H."/>
            <person name="Borzym K."/>
            <person name="Langer I."/>
            <person name="Beck A."/>
            <person name="Lehrach H."/>
            <person name="Reinhardt R."/>
            <person name="Pohl T.M."/>
            <person name="Eger P."/>
            <person name="Zimmermann W."/>
            <person name="Wedler H."/>
            <person name="Wambutt R."/>
            <person name="Purnelle B."/>
            <person name="Goffeau A."/>
            <person name="Cadieu E."/>
            <person name="Dreano S."/>
            <person name="Gloux S."/>
            <person name="Lelaure V."/>
            <person name="Mottier S."/>
            <person name="Galibert F."/>
            <person name="Aves S.J."/>
            <person name="Xiang Z."/>
            <person name="Hunt C."/>
            <person name="Moore K."/>
            <person name="Hurst S.M."/>
            <person name="Lucas M."/>
            <person name="Rochet M."/>
            <person name="Gaillardin C."/>
            <person name="Tallada V.A."/>
            <person name="Garzon A."/>
            <person name="Thode G."/>
            <person name="Daga R.R."/>
            <person name="Cruzado L."/>
            <person name="Jimenez J."/>
            <person name="Sanchez M."/>
            <person name="del Rey F."/>
            <person name="Benito J."/>
            <person name="Dominguez A."/>
            <person name="Revuelta J.L."/>
            <person name="Moreno S."/>
            <person name="Armstrong J."/>
            <person name="Forsburg S.L."/>
            <person name="Cerutti L."/>
            <person name="Lowe T."/>
            <person name="McCombie W.R."/>
            <person name="Paulsen I."/>
            <person name="Potashkin J."/>
            <person name="Shpakovski G.V."/>
            <person name="Ussery D."/>
            <person name="Barrell B.G."/>
            <person name="Nurse P."/>
        </authorList>
    </citation>
    <scope>NUCLEOTIDE SEQUENCE [LARGE SCALE GENOMIC DNA]</scope>
    <source>
        <strain>972 / ATCC 24843</strain>
    </source>
</reference>
<reference key="2">
    <citation type="journal article" date="2004" name="Curr. Biol.">
        <title>The Ubx2 and Ubx3 cofactors direct Cdc48 activity to proteolytic and nonproteolytic ubiquitin-dependent processes.</title>
        <authorList>
            <person name="Hartmann-Petersen R."/>
            <person name="Wallace M."/>
            <person name="Hofmann K."/>
            <person name="Koch G."/>
            <person name="Johnsen A.H."/>
            <person name="Hendil K.B."/>
            <person name="Gordon C."/>
        </authorList>
    </citation>
    <scope>INTERACTION WITH UBX2 AND UBX3</scope>
</reference>
<reference key="3">
    <citation type="journal article" date="2004" name="Mol. Cell. Biol.">
        <title>Lub1 participates in ubiquitin homeostasis and stress response via maintenance of cellular ubiquitin contents in fission yeast.</title>
        <authorList>
            <person name="Ogiso Y."/>
            <person name="Sugiura R."/>
            <person name="Kamo T."/>
            <person name="Yanagiya S."/>
            <person name="Lu Y."/>
            <person name="Okazaki K."/>
            <person name="Shuntoh H."/>
            <person name="Kuno T."/>
        </authorList>
    </citation>
    <scope>INTERACTION WITH LUB1</scope>
</reference>
<reference key="4">
    <citation type="journal article" date="2006" name="Nat. Biotechnol.">
        <title>ORFeome cloning and global analysis of protein localization in the fission yeast Schizosaccharomyces pombe.</title>
        <authorList>
            <person name="Matsuyama A."/>
            <person name="Arai R."/>
            <person name="Yashiroda Y."/>
            <person name="Shirai A."/>
            <person name="Kamata A."/>
            <person name="Sekido S."/>
            <person name="Kobayashi Y."/>
            <person name="Hashimoto A."/>
            <person name="Hamamoto M."/>
            <person name="Hiraoka Y."/>
            <person name="Horinouchi S."/>
            <person name="Yoshida M."/>
        </authorList>
    </citation>
    <scope>SUBCELLULAR LOCATION [LARGE SCALE ANALYSIS]</scope>
</reference>
<reference key="5">
    <citation type="journal article" date="2016" name="EMBO J.">
        <title>A Golgi rhomboid protease Rbd2 recruits Cdc48 to cleave yeast SREBP.</title>
        <authorList>
            <person name="Hwang J."/>
            <person name="Ribbens D."/>
            <person name="Raychaudhuri S."/>
            <person name="Cairns L."/>
            <person name="Gu H."/>
            <person name="Frost A."/>
            <person name="Urban S."/>
            <person name="Espenshade P.J."/>
        </authorList>
    </citation>
    <scope>FUNCTION</scope>
    <scope>INTERACTION WITH RBD2</scope>
</reference>
<gene>
    <name evidence="1" type="primary">cdc48</name>
    <name evidence="11" type="ORF">SPAC1565.08</name>
    <name type="ORF">SPAC6F12.01</name>
</gene>
<comment type="function">
    <text evidence="1 9">ATP-dependent chaperone which probably uses the energy provided by ATP hydrolysis to generate mechanical force to unfold substrate proteins, disassemble protein complexes, and disaggregate protein aggregates. By recruiting and promoting the degradation of ubiquitinated proteins, plays a role in the ubiquitin fusion degradation (UFD) pathway. Has a role in the endoplasmic reticulum-associated degradation (ERAD) pathway which mediates the cytoplasmic elimination of misfolded proteins exported from the ER. Involved in spindle disassembly. Component of the ribosome quality control complex (RQC), a ribosome-associated complex that mediates ubiquitination and extraction of incompletely synthesized nascent chains for proteasomal degradation. CDC48 may provide the mechanical force that dislodges the polyubiquitinated nascent peptides from the exit channel. Required for ribophagy, a process which relocalizes ribosomal particles into the vacuole for degradation in response to starvation. Has a role in substrate recognition mediating rbd2-dependent cleavage of sterol regulatory element-binding protein sre1 and sre2 (PubMed:27655872).</text>
</comment>
<comment type="catalytic activity">
    <reaction evidence="1">
        <text>ATP + H2O = ADP + phosphate + H(+)</text>
        <dbReference type="Rhea" id="RHEA:13065"/>
        <dbReference type="ChEBI" id="CHEBI:15377"/>
        <dbReference type="ChEBI" id="CHEBI:15378"/>
        <dbReference type="ChEBI" id="CHEBI:30616"/>
        <dbReference type="ChEBI" id="CHEBI:43474"/>
        <dbReference type="ChEBI" id="CHEBI:456216"/>
        <dbReference type="EC" id="3.6.4.6"/>
    </reaction>
</comment>
<comment type="activity regulation">
    <text evidence="2">The first ATP-binding region has low ATPase activity. The second ATP-binding region is responsible for ATPase activity. ATP binding to the first ATP-binding region induces intrinsic activity of the second ATP-binding region. While ATP binding to the first ATP-binding region appears to prevent ATP hydrolysis by the second ATP-binding region, ADP-binding to first region promotes the coordinate and cooperative ATPase cycle of the second ATP-binding region. ATP binding to the first ATP-binding region induces a conformational change, promoting the rotation of the first ATP-binding region relative to the second ATP-binding region in the hexamer.</text>
</comment>
<comment type="subunit">
    <text evidence="1 6 7 9">Component of the ribosome quality control complex (RQC), composed of the E3 ubiquitin ligase rkr1/ltn1, rqc1 and mtr1/rqc2, as well as cdc48 and its ubiquitin-binding cofactors. RQC forms a stable complex with 60S ribosomal subunits (By similarity). Interacts with ubx2 and ubx3 (PubMed:15120077). Interacts with lub1 (PubMed:14993272). Interacts with rbd2 (via C-terminal SHP box); the interaction is required for rbd2-mediated cleavage of sre1 and sre2 (PubMed:27655872).</text>
</comment>
<comment type="subcellular location">
    <subcellularLocation>
        <location evidence="8">Cytoplasm</location>
    </subcellularLocation>
    <subcellularLocation>
        <location evidence="8">Nucleus</location>
    </subcellularLocation>
</comment>
<comment type="similarity">
    <text evidence="10">Belongs to the AAA ATPase family.</text>
</comment>
<sequence length="815" mass="90125">MNAPSTMTDKKPEVEHLQGENPPKDTYSAEDTATAILRKKRKPNSLVVDDATNDDNSVITLSSNTMETLQLFRGDTVVVKGKRRKDTVLIVLTDEEMEDGVARINRVVRNNLRVRLGDIVTINPCPDIKYAERISVLPLADTVEGLTGSLFDVYLKPYFVEAYRPIRKGDLFVVRGSMRQVEFKVVDVAPDEFGIVSQDTIIHWEGEPINREDEESSLAEVGYDDIGGCRRQMAQIRELVELPLRHPQLFKSIGIKPPRGILMYGPPGTGKTLMARAVANETGAFFFLINGPEIMSKMAGESESNLRKAFEEAEKNSPAIIFIDEIDSIAPKREKTNGEVERRVVSQLLTLMDGMKARSNVVVMAATNRPNSIDPALRRFGRFDREVDVGIPDPTGRLEILRIHTKNMKLADDVDLEQIAAETHGYVGSDLASLCSEAAMQQIREKMDMIDLDEDEIDAEVLDSLGVTMDNFRFALGSSNPSALRETVVEVPNVRWEDIGGLEEVKRELRETVQMPVMYAEKFLRFGVTPSKGVLFFGPPGTGKTLLAKAIANECSANFISVKGPELLSMWFGESESNVRDIFDKARAAAPCVVFLDELDSIAKARGASAGDSGGGDRVVNQLLTEMDGVNSKKNVFVIGATNRPDQIDPALMRPGRLDQLIYVPLPDEEARFSILQTQLRHTPVAEDVDLRAVAKATHGFSGADLEFVVQRAVKLAIKDSIEEDIKRENETGEAPADDVVMDEDASVSQVQRHHVEEAMKMARRSVSDAEVRRYEAYAHQLLTSRGLTGFQFDSADSNTNGPSFGNDGADDLYA</sequence>
<proteinExistence type="evidence at protein level"/>